<feature type="chain" id="PRO_0000413393" description="Stress response regulator protein 1">
    <location>
        <begin position="1"/>
        <end position="289"/>
    </location>
</feature>
<feature type="domain" description="Response regulatory" evidence="2">
    <location>
        <begin position="163"/>
        <end position="281"/>
    </location>
</feature>
<feature type="region of interest" description="Disordered" evidence="3">
    <location>
        <begin position="77"/>
        <end position="136"/>
    </location>
</feature>
<feature type="compositionally biased region" description="Acidic residues" evidence="3">
    <location>
        <begin position="83"/>
        <end position="98"/>
    </location>
</feature>
<feature type="compositionally biased region" description="Polar residues" evidence="3">
    <location>
        <begin position="127"/>
        <end position="136"/>
    </location>
</feature>
<feature type="modified residue" description="4-aspartylphosphate" evidence="2">
    <location>
        <position position="214"/>
    </location>
</feature>
<comment type="function">
    <text evidence="1">Required for stress adaptation, morphogenesis and virulence.</text>
</comment>
<comment type="sequence caution" evidence="4">
    <conflict type="erroneous initiation">
        <sequence resource="EMBL-CDS" id="ABN64998"/>
    </conflict>
    <text>Truncated N-terminus.</text>
</comment>
<proteinExistence type="inferred from homology"/>
<organism>
    <name type="scientific">Scheffersomyces stipitis (strain ATCC 58785 / CBS 6054 / NBRC 10063 / NRRL Y-11545)</name>
    <name type="common">Yeast</name>
    <name type="synonym">Pichia stipitis</name>
    <dbReference type="NCBI Taxonomy" id="322104"/>
    <lineage>
        <taxon>Eukaryota</taxon>
        <taxon>Fungi</taxon>
        <taxon>Dikarya</taxon>
        <taxon>Ascomycota</taxon>
        <taxon>Saccharomycotina</taxon>
        <taxon>Pichiomycetes</taxon>
        <taxon>Debaryomycetaceae</taxon>
        <taxon>Scheffersomyces</taxon>
    </lineage>
</organism>
<keyword id="KW-0597">Phosphoprotein</keyword>
<keyword id="KW-1185">Reference proteome</keyword>
<evidence type="ECO:0000250" key="1"/>
<evidence type="ECO:0000255" key="2">
    <source>
        <dbReference type="PROSITE-ProRule" id="PRU00169"/>
    </source>
</evidence>
<evidence type="ECO:0000256" key="3">
    <source>
        <dbReference type="SAM" id="MobiDB-lite"/>
    </source>
</evidence>
<evidence type="ECO:0000305" key="4"/>
<dbReference type="EMBL" id="CP000496">
    <property type="protein sequence ID" value="ABN64998.2"/>
    <property type="status" value="ALT_INIT"/>
    <property type="molecule type" value="Genomic_DNA"/>
</dbReference>
<dbReference type="RefSeq" id="XP_001383027.2">
    <property type="nucleotide sequence ID" value="XM_001382990.1"/>
</dbReference>
<dbReference type="SMR" id="A3LP85"/>
<dbReference type="STRING" id="322104.A3LP85"/>
<dbReference type="GeneID" id="4837023"/>
<dbReference type="KEGG" id="pic:PICST_54813"/>
<dbReference type="eggNOG" id="KOG0519">
    <property type="taxonomic scope" value="Eukaryota"/>
</dbReference>
<dbReference type="HOGENOM" id="CLU_2126999_0_0_1"/>
<dbReference type="InParanoid" id="A3LP85"/>
<dbReference type="OrthoDB" id="303614at2759"/>
<dbReference type="Proteomes" id="UP000002258">
    <property type="component" value="Chromosome 2"/>
</dbReference>
<dbReference type="GO" id="GO:0036180">
    <property type="term" value="P:filamentous growth of a population of unicellular organisms in response to biotic stimulus"/>
    <property type="evidence" value="ECO:0007669"/>
    <property type="project" value="UniProtKB-ARBA"/>
</dbReference>
<dbReference type="GO" id="GO:0000160">
    <property type="term" value="P:phosphorelay signal transduction system"/>
    <property type="evidence" value="ECO:0007669"/>
    <property type="project" value="InterPro"/>
</dbReference>
<dbReference type="GO" id="GO:1900445">
    <property type="term" value="P:positive regulation of filamentous growth of a population of unicellular organisms in response to biotic stimulus"/>
    <property type="evidence" value="ECO:0007669"/>
    <property type="project" value="UniProtKB-ARBA"/>
</dbReference>
<dbReference type="CDD" id="cd17546">
    <property type="entry name" value="REC_hyHK_CKI1_RcsC-like"/>
    <property type="match status" value="1"/>
</dbReference>
<dbReference type="Gene3D" id="3.40.50.2300">
    <property type="match status" value="1"/>
</dbReference>
<dbReference type="InterPro" id="IPR050595">
    <property type="entry name" value="Bact_response_regulator"/>
</dbReference>
<dbReference type="InterPro" id="IPR011006">
    <property type="entry name" value="CheY-like_superfamily"/>
</dbReference>
<dbReference type="InterPro" id="IPR001789">
    <property type="entry name" value="Sig_transdc_resp-reg_receiver"/>
</dbReference>
<dbReference type="PANTHER" id="PTHR44591:SF3">
    <property type="entry name" value="RESPONSE REGULATORY DOMAIN-CONTAINING PROTEIN"/>
    <property type="match status" value="1"/>
</dbReference>
<dbReference type="PANTHER" id="PTHR44591">
    <property type="entry name" value="STRESS RESPONSE REGULATOR PROTEIN 1"/>
    <property type="match status" value="1"/>
</dbReference>
<dbReference type="Pfam" id="PF00072">
    <property type="entry name" value="Response_reg"/>
    <property type="match status" value="1"/>
</dbReference>
<dbReference type="SMART" id="SM00448">
    <property type="entry name" value="REC"/>
    <property type="match status" value="1"/>
</dbReference>
<dbReference type="SUPFAM" id="SSF52172">
    <property type="entry name" value="CheY-like"/>
    <property type="match status" value="1"/>
</dbReference>
<dbReference type="PROSITE" id="PS50110">
    <property type="entry name" value="RESPONSE_REGULATORY"/>
    <property type="match status" value="1"/>
</dbReference>
<name>SRR1_PICST</name>
<protein>
    <recommendedName>
        <fullName>Stress response regulator protein 1</fullName>
    </recommendedName>
</protein>
<gene>
    <name type="primary">SRR1</name>
    <name type="ORF">PICST_54813</name>
</gene>
<sequence length="289" mass="32353">MSSSVTNKSLDSLTLSAVSINGPSSTASSTHSNYTTQHSNQDYFSIKPKLKVSISNEISSTRSSEIIPGNPLLFSPLDCTNSEMDEEDDFEDDEDDENLGLINPLHHKSSHGQISDYSPLTPFTEPPSASLSKPSFTSHSPVSENIDINLVIRRKSANPATYNFLIVDDNIINIKILERILFKLYPNCNIKKLQDPTKVANAIKTHKFDVVFLDIEMPEITGVDISREMRQQPVFNSVGIIAVTTRTMAHDLLVYETVGIDYTFAKPLTYNYDFVMDRIDEVIRNRIST</sequence>
<reference key="1">
    <citation type="journal article" date="2007" name="Nat. Biotechnol.">
        <title>Genome sequence of the lignocellulose-bioconverting and xylose-fermenting yeast Pichia stipitis.</title>
        <authorList>
            <person name="Jeffries T.W."/>
            <person name="Grigoriev I.V."/>
            <person name="Grimwood J."/>
            <person name="Laplaza J.M."/>
            <person name="Aerts A."/>
            <person name="Salamov A."/>
            <person name="Schmutz J."/>
            <person name="Lindquist E."/>
            <person name="Dehal P."/>
            <person name="Shapiro H."/>
            <person name="Jin Y.-S."/>
            <person name="Passoth V."/>
            <person name="Richardson P.M."/>
        </authorList>
    </citation>
    <scope>NUCLEOTIDE SEQUENCE [LARGE SCALE GENOMIC DNA]</scope>
    <source>
        <strain>ATCC 58785 / CBS 6054 / NBRC 10063 / NRRL Y-11545</strain>
    </source>
</reference>
<accession>A3LP85</accession>